<gene>
    <name evidence="1" type="primary">mdtC</name>
    <name type="ordered locus">EcSMS35_0984</name>
</gene>
<dbReference type="EMBL" id="CP000970">
    <property type="protein sequence ID" value="ACB15900.1"/>
    <property type="molecule type" value="Genomic_DNA"/>
</dbReference>
<dbReference type="RefSeq" id="WP_000667580.1">
    <property type="nucleotide sequence ID" value="NC_010498.1"/>
</dbReference>
<dbReference type="SMR" id="B1LNW5"/>
<dbReference type="KEGG" id="ecm:EcSMS35_0984"/>
<dbReference type="HOGENOM" id="CLU_002755_1_2_6"/>
<dbReference type="Proteomes" id="UP000007011">
    <property type="component" value="Chromosome"/>
</dbReference>
<dbReference type="GO" id="GO:0005886">
    <property type="term" value="C:plasma membrane"/>
    <property type="evidence" value="ECO:0007669"/>
    <property type="project" value="UniProtKB-SubCell"/>
</dbReference>
<dbReference type="GO" id="GO:0042910">
    <property type="term" value="F:xenobiotic transmembrane transporter activity"/>
    <property type="evidence" value="ECO:0007669"/>
    <property type="project" value="TreeGrafter"/>
</dbReference>
<dbReference type="FunFam" id="1.20.1640.10:FF:000001">
    <property type="entry name" value="Efflux pump membrane transporter"/>
    <property type="match status" value="1"/>
</dbReference>
<dbReference type="FunFam" id="3.30.70.1430:FF:000001">
    <property type="entry name" value="Efflux pump membrane transporter"/>
    <property type="match status" value="1"/>
</dbReference>
<dbReference type="FunFam" id="3.30.2090.10:FF:000004">
    <property type="entry name" value="Multidrug resistance protein MdtC"/>
    <property type="match status" value="1"/>
</dbReference>
<dbReference type="FunFam" id="3.30.2090.10:FF:000005">
    <property type="entry name" value="Multidrug resistance protein MdtC"/>
    <property type="match status" value="1"/>
</dbReference>
<dbReference type="FunFam" id="3.30.70.1430:FF:000004">
    <property type="entry name" value="Multidrug resistance protein MdtC"/>
    <property type="match status" value="1"/>
</dbReference>
<dbReference type="Gene3D" id="3.30.70.1430">
    <property type="entry name" value="Multidrug efflux transporter AcrB pore domain"/>
    <property type="match status" value="2"/>
</dbReference>
<dbReference type="Gene3D" id="3.30.70.1440">
    <property type="entry name" value="Multidrug efflux transporter AcrB pore domain"/>
    <property type="match status" value="1"/>
</dbReference>
<dbReference type="Gene3D" id="3.30.70.1320">
    <property type="entry name" value="Multidrug efflux transporter AcrB pore domain like"/>
    <property type="match status" value="1"/>
</dbReference>
<dbReference type="Gene3D" id="3.30.2090.10">
    <property type="entry name" value="Multidrug efflux transporter AcrB TolC docking domain, DN and DC subdomains"/>
    <property type="match status" value="2"/>
</dbReference>
<dbReference type="Gene3D" id="1.20.1640.10">
    <property type="entry name" value="Multidrug efflux transporter AcrB transmembrane domain"/>
    <property type="match status" value="2"/>
</dbReference>
<dbReference type="HAMAP" id="MF_01424">
    <property type="entry name" value="MdtC"/>
    <property type="match status" value="1"/>
</dbReference>
<dbReference type="InterPro" id="IPR027463">
    <property type="entry name" value="AcrB_DN_DC_subdom"/>
</dbReference>
<dbReference type="InterPro" id="IPR001036">
    <property type="entry name" value="Acrflvin-R"/>
</dbReference>
<dbReference type="InterPro" id="IPR023931">
    <property type="entry name" value="Multidrug-R_MdtC"/>
</dbReference>
<dbReference type="NCBIfam" id="NF007905">
    <property type="entry name" value="PRK10614.1"/>
    <property type="match status" value="1"/>
</dbReference>
<dbReference type="NCBIfam" id="NF033617">
    <property type="entry name" value="RND_permease_2"/>
    <property type="match status" value="1"/>
</dbReference>
<dbReference type="PANTHER" id="PTHR32063">
    <property type="match status" value="1"/>
</dbReference>
<dbReference type="PANTHER" id="PTHR32063:SF34">
    <property type="entry name" value="MULTIDRUG RESISTANCE PROTEIN MDTC"/>
    <property type="match status" value="1"/>
</dbReference>
<dbReference type="Pfam" id="PF00873">
    <property type="entry name" value="ACR_tran"/>
    <property type="match status" value="1"/>
</dbReference>
<dbReference type="PRINTS" id="PR00702">
    <property type="entry name" value="ACRIFLAVINRP"/>
</dbReference>
<dbReference type="SUPFAM" id="SSF82693">
    <property type="entry name" value="Multidrug efflux transporter AcrB pore domain, PN1, PN2, PC1 and PC2 subdomains"/>
    <property type="match status" value="4"/>
</dbReference>
<dbReference type="SUPFAM" id="SSF82714">
    <property type="entry name" value="Multidrug efflux transporter AcrB TolC docking domain, DN and DC subdomains"/>
    <property type="match status" value="2"/>
</dbReference>
<dbReference type="SUPFAM" id="SSF82866">
    <property type="entry name" value="Multidrug efflux transporter AcrB transmembrane domain"/>
    <property type="match status" value="2"/>
</dbReference>
<proteinExistence type="evidence at transcript level"/>
<organism>
    <name type="scientific">Escherichia coli (strain SMS-3-5 / SECEC)</name>
    <dbReference type="NCBI Taxonomy" id="439855"/>
    <lineage>
        <taxon>Bacteria</taxon>
        <taxon>Pseudomonadati</taxon>
        <taxon>Pseudomonadota</taxon>
        <taxon>Gammaproteobacteria</taxon>
        <taxon>Enterobacterales</taxon>
        <taxon>Enterobacteriaceae</taxon>
        <taxon>Escherichia</taxon>
    </lineage>
</organism>
<keyword id="KW-0997">Cell inner membrane</keyword>
<keyword id="KW-1003">Cell membrane</keyword>
<keyword id="KW-0472">Membrane</keyword>
<keyword id="KW-0812">Transmembrane</keyword>
<keyword id="KW-1133">Transmembrane helix</keyword>
<keyword id="KW-0813">Transport</keyword>
<feature type="chain" id="PRO_1000145673" description="Multidrug resistance protein MdtC">
    <location>
        <begin position="1"/>
        <end position="1025"/>
    </location>
</feature>
<feature type="transmembrane region" description="Helical" evidence="1">
    <location>
        <begin position="3"/>
        <end position="23"/>
    </location>
</feature>
<feature type="transmembrane region" description="Helical" evidence="1">
    <location>
        <begin position="333"/>
        <end position="353"/>
    </location>
</feature>
<feature type="transmembrane region" description="Helical" evidence="1">
    <location>
        <begin position="360"/>
        <end position="380"/>
    </location>
</feature>
<feature type="transmembrane region" description="Helical" evidence="1">
    <location>
        <begin position="387"/>
        <end position="407"/>
    </location>
</feature>
<feature type="transmembrane region" description="Helical" evidence="1">
    <location>
        <begin position="431"/>
        <end position="451"/>
    </location>
</feature>
<feature type="transmembrane region" description="Helical" evidence="1">
    <location>
        <begin position="463"/>
        <end position="483"/>
    </location>
</feature>
<feature type="transmembrane region" description="Helical" evidence="1">
    <location>
        <begin position="528"/>
        <end position="548"/>
    </location>
</feature>
<feature type="transmembrane region" description="Helical" evidence="1">
    <location>
        <begin position="853"/>
        <end position="873"/>
    </location>
</feature>
<feature type="transmembrane region" description="Helical" evidence="1">
    <location>
        <begin position="875"/>
        <end position="895"/>
    </location>
</feature>
<feature type="transmembrane region" description="Helical" evidence="1">
    <location>
        <begin position="897"/>
        <end position="917"/>
    </location>
</feature>
<feature type="transmembrane region" description="Helical" evidence="1">
    <location>
        <begin position="953"/>
        <end position="973"/>
    </location>
</feature>
<feature type="transmembrane region" description="Helical" evidence="1">
    <location>
        <begin position="984"/>
        <end position="1004"/>
    </location>
</feature>
<accession>B1LNW5</accession>
<comment type="function">
    <text evidence="1">The MdtABC tripartite complex confers resistance against novobiocin and deoxycholate.</text>
</comment>
<comment type="subunit">
    <text evidence="1">Part of a tripartite efflux system composed of MdtA, MdtB and MdtC. MdtC forms a heteromultimer with MdtB.</text>
</comment>
<comment type="subcellular location">
    <subcellularLocation>
        <location evidence="1">Cell inner membrane</location>
        <topology evidence="1">Multi-pass membrane protein</topology>
    </subcellularLocation>
</comment>
<comment type="induction">
    <text>The mdtABC operon is transcriptionally activated by BaeR.</text>
</comment>
<comment type="similarity">
    <text evidence="1">Belongs to the resistance-nodulation-cell division (RND) (TC 2.A.6) family. MdtC subfamily.</text>
</comment>
<reference key="1">
    <citation type="journal article" date="2008" name="J. Bacteriol.">
        <title>Insights into the environmental resistance gene pool from the genome sequence of the multidrug-resistant environmental isolate Escherichia coli SMS-3-5.</title>
        <authorList>
            <person name="Fricke W.F."/>
            <person name="Wright M.S."/>
            <person name="Lindell A.H."/>
            <person name="Harkins D.M."/>
            <person name="Baker-Austin C."/>
            <person name="Ravel J."/>
            <person name="Stepanauskas R."/>
        </authorList>
    </citation>
    <scope>NUCLEOTIDE SEQUENCE [LARGE SCALE GENOMIC DNA]</scope>
    <source>
        <strain>SMS-3-5 / SECEC</strain>
    </source>
</reference>
<protein>
    <recommendedName>
        <fullName evidence="1">Multidrug resistance protein MdtC</fullName>
    </recommendedName>
    <alternativeName>
        <fullName evidence="1">Multidrug transporter MdtC</fullName>
    </alternativeName>
</protein>
<name>MDTC_ECOSM</name>
<sequence length="1025" mass="110982">MKFFALFIYRPVATILLSVAITLCGILGFRMLPVAPLPQVDFPVIMVSASLPGASPETMASSVATPLERSLGRIAGVSEMTSSSSLGSTRIILQFDFDRDINGAARDVQAAINAAQSLLPSGMPSRPTYRKANPSDAPIMILTLTSDTYSQGELYDFASTQLAPTISQIDGVGDVDVGGSSLPAVRVGLNPQALFNQGVSLDDVRTAISNANVRKPQGVLEDGTHRWQIQTNDELKTAAEYQPLIIHYNNGGAVRLGDVATVTDSVQDVRNAGMTNAKPAILLMIRKLPEANIIQTVDSIRARLPELQSTIPAAIDLQIAQDRSPTIRASLEEVEQTLIISVALVILVVFLFLRSGRATIIPAVAVPVSLIGTFAAMYLCGFSLNNLSLMALTIATGFVVDDAIVVLENIARHLEAGMKPLQAALQGTREVGFTVLSMSLSLVAVFLPLLLMGGLPGRLLREFAVTLSVAIGISLLVSLTLTPMMCGWMLKASKPREQKRLRGFGRMLVALQQGYGKSLKWVLNHTRLVGVVLLGTIALNIWLYISIPKTFFPEQDTGVLMGGIQADQSISFQAMRGKLQDFMKIIRDDPAVDNVTGFTGGSRVNSGMMFITLKPRGERSETAQQIIDRLRVKLAKEPGANLFLMAVQDIRVGGRQSNASYQYTLLSDDLAALREWEPKIRKKLATLPELADVNSDQQDNGAEMNLVYDRDTMARLGIDVQAANSLLNNAFGQRQISTIYQPMNQYKVVMEVDPRYTQDISALEKMFVINNEGKAIPLSYFAKWQPANAPLSVNHQGLSAASTISFNLPTGKSLSDASAAIDRAMTQLGVPSTVRGSFAGTAQVFQETMNSQVILIIAAIATVYIVLGILYESYVHPLTILSTLPSAGVGALLALELFNAPFSLIALIGIMLLIGIVKKNAIMMVDFALEAQRHGNLTPQEAIFQACLLRFRPIMMTTLAALFGALPLVLSGGDGSELRQPLGITIVGGLVMSQLLTLYTTPVVYLFFDRLRLRFSRKPKQTVTE</sequence>
<evidence type="ECO:0000255" key="1">
    <source>
        <dbReference type="HAMAP-Rule" id="MF_01424"/>
    </source>
</evidence>